<feature type="chain" id="PRO_1000014360" description="Glycogen synthase">
    <location>
        <begin position="1"/>
        <end position="485"/>
    </location>
</feature>
<feature type="binding site" evidence="1">
    <location>
        <position position="15"/>
    </location>
    <ligand>
        <name>ADP-alpha-D-glucose</name>
        <dbReference type="ChEBI" id="CHEBI:57498"/>
    </ligand>
</feature>
<gene>
    <name evidence="1" type="primary">glgA</name>
    <name type="ordered locus">GTNG_2779</name>
</gene>
<organism>
    <name type="scientific">Geobacillus thermodenitrificans (strain NG80-2)</name>
    <dbReference type="NCBI Taxonomy" id="420246"/>
    <lineage>
        <taxon>Bacteria</taxon>
        <taxon>Bacillati</taxon>
        <taxon>Bacillota</taxon>
        <taxon>Bacilli</taxon>
        <taxon>Bacillales</taxon>
        <taxon>Anoxybacillaceae</taxon>
        <taxon>Geobacillus</taxon>
    </lineage>
</organism>
<name>GLGA_GEOTN</name>
<dbReference type="EC" id="2.4.1.21" evidence="1"/>
<dbReference type="EMBL" id="CP000557">
    <property type="protein sequence ID" value="ABO68124.1"/>
    <property type="molecule type" value="Genomic_DNA"/>
</dbReference>
<dbReference type="RefSeq" id="WP_011888027.1">
    <property type="nucleotide sequence ID" value="NC_009328.1"/>
</dbReference>
<dbReference type="SMR" id="A4IS20"/>
<dbReference type="CAZy" id="GT5">
    <property type="family name" value="Glycosyltransferase Family 5"/>
</dbReference>
<dbReference type="KEGG" id="gtn:GTNG_2779"/>
<dbReference type="eggNOG" id="COG0297">
    <property type="taxonomic scope" value="Bacteria"/>
</dbReference>
<dbReference type="HOGENOM" id="CLU_009583_18_2_9"/>
<dbReference type="UniPathway" id="UPA00164"/>
<dbReference type="Proteomes" id="UP000001578">
    <property type="component" value="Chromosome"/>
</dbReference>
<dbReference type="GO" id="GO:0009011">
    <property type="term" value="F:alpha-1,4-glucan glucosyltransferase (ADP-glucose donor) activity"/>
    <property type="evidence" value="ECO:0007669"/>
    <property type="project" value="UniProtKB-UniRule"/>
</dbReference>
<dbReference type="GO" id="GO:0004373">
    <property type="term" value="F:alpha-1,4-glucan glucosyltransferase (UDP-glucose donor) activity"/>
    <property type="evidence" value="ECO:0007669"/>
    <property type="project" value="InterPro"/>
</dbReference>
<dbReference type="GO" id="GO:0005978">
    <property type="term" value="P:glycogen biosynthetic process"/>
    <property type="evidence" value="ECO:0007669"/>
    <property type="project" value="UniProtKB-UniRule"/>
</dbReference>
<dbReference type="CDD" id="cd03791">
    <property type="entry name" value="GT5_Glycogen_synthase_DULL1-like"/>
    <property type="match status" value="1"/>
</dbReference>
<dbReference type="Gene3D" id="3.40.50.2000">
    <property type="entry name" value="Glycogen Phosphorylase B"/>
    <property type="match status" value="2"/>
</dbReference>
<dbReference type="HAMAP" id="MF_00484">
    <property type="entry name" value="Glycogen_synth"/>
    <property type="match status" value="1"/>
</dbReference>
<dbReference type="InterPro" id="IPR001296">
    <property type="entry name" value="Glyco_trans_1"/>
</dbReference>
<dbReference type="InterPro" id="IPR011835">
    <property type="entry name" value="GS/SS"/>
</dbReference>
<dbReference type="InterPro" id="IPR013534">
    <property type="entry name" value="Starch_synth_cat_dom"/>
</dbReference>
<dbReference type="NCBIfam" id="TIGR02095">
    <property type="entry name" value="glgA"/>
    <property type="match status" value="1"/>
</dbReference>
<dbReference type="NCBIfam" id="NF001898">
    <property type="entry name" value="PRK00654.1-1"/>
    <property type="match status" value="1"/>
</dbReference>
<dbReference type="NCBIfam" id="NF001899">
    <property type="entry name" value="PRK00654.1-2"/>
    <property type="match status" value="1"/>
</dbReference>
<dbReference type="PANTHER" id="PTHR45825:SF11">
    <property type="entry name" value="ALPHA AMYLASE DOMAIN-CONTAINING PROTEIN"/>
    <property type="match status" value="1"/>
</dbReference>
<dbReference type="PANTHER" id="PTHR45825">
    <property type="entry name" value="GRANULE-BOUND STARCH SYNTHASE 1, CHLOROPLASTIC/AMYLOPLASTIC"/>
    <property type="match status" value="1"/>
</dbReference>
<dbReference type="Pfam" id="PF08323">
    <property type="entry name" value="Glyco_transf_5"/>
    <property type="match status" value="1"/>
</dbReference>
<dbReference type="Pfam" id="PF00534">
    <property type="entry name" value="Glycos_transf_1"/>
    <property type="match status" value="1"/>
</dbReference>
<dbReference type="SUPFAM" id="SSF53756">
    <property type="entry name" value="UDP-Glycosyltransferase/glycogen phosphorylase"/>
    <property type="match status" value="1"/>
</dbReference>
<accession>A4IS20</accession>
<reference key="1">
    <citation type="journal article" date="2007" name="Proc. Natl. Acad. Sci. U.S.A.">
        <title>Genome and proteome of long-chain alkane degrading Geobacillus thermodenitrificans NG80-2 isolated from a deep-subsurface oil reservoir.</title>
        <authorList>
            <person name="Feng L."/>
            <person name="Wang W."/>
            <person name="Cheng J."/>
            <person name="Ren Y."/>
            <person name="Zhao G."/>
            <person name="Gao C."/>
            <person name="Tang Y."/>
            <person name="Liu X."/>
            <person name="Han W."/>
            <person name="Peng X."/>
            <person name="Liu R."/>
            <person name="Wang L."/>
        </authorList>
    </citation>
    <scope>NUCLEOTIDE SEQUENCE [LARGE SCALE GENOMIC DNA]</scope>
    <source>
        <strain>NG80-2</strain>
    </source>
</reference>
<protein>
    <recommendedName>
        <fullName evidence="1">Glycogen synthase</fullName>
        <ecNumber evidence="1">2.4.1.21</ecNumber>
    </recommendedName>
    <alternativeName>
        <fullName evidence="1">Starch [bacterial glycogen] synthase</fullName>
    </alternativeName>
</protein>
<comment type="function">
    <text evidence="1">Synthesizes alpha-1,4-glucan chains using ADP-glucose.</text>
</comment>
<comment type="catalytic activity">
    <reaction evidence="1">
        <text>[(1-&gt;4)-alpha-D-glucosyl](n) + ADP-alpha-D-glucose = [(1-&gt;4)-alpha-D-glucosyl](n+1) + ADP + H(+)</text>
        <dbReference type="Rhea" id="RHEA:18189"/>
        <dbReference type="Rhea" id="RHEA-COMP:9584"/>
        <dbReference type="Rhea" id="RHEA-COMP:9587"/>
        <dbReference type="ChEBI" id="CHEBI:15378"/>
        <dbReference type="ChEBI" id="CHEBI:15444"/>
        <dbReference type="ChEBI" id="CHEBI:57498"/>
        <dbReference type="ChEBI" id="CHEBI:456216"/>
        <dbReference type="EC" id="2.4.1.21"/>
    </reaction>
</comment>
<comment type="pathway">
    <text evidence="1">Glycan biosynthesis; glycogen biosynthesis.</text>
</comment>
<comment type="similarity">
    <text evidence="1">Belongs to the glycosyltransferase 1 family. Bacterial/plant glycogen synthase subfamily.</text>
</comment>
<sequence>MKVLFAVSECAPFAKSGGLADVAGALPKELRRLGIDARVMLPKYETIAPEWKKKMKKVAELIVPVGWRRQYCGVEELRHDGVIYYFIDNEYYFKRPQLYGHYDDGERFAYFCRAVLEVLPEIQFQPDVIHCHDWHTGMVPFLLREQYRHELFYVDMRTVFTIHNLQFQGLFPRGILEDLLNLDGRYFTVDHLEFYGCVSFMKGALVASDLITTVSPTYKEEIQTAYYGERLDGLLRARRDDLLGILNGIDDEFYNPEADPFLTATYSVHTRERKQLNKRALQRQFGLPEWDDVPLIAMVTRMTAQKGLDLVTCVFHEMMSEDMQLVVLGTGDWRFEQFFSQMAAAYPGKVGVYIGFHEPLAHQIYAGADLFLMPSLFEPCGLSQMIALRYGTIPIVRETGGLNDTVQSYNEITKEGNGFSFTNFNAHDMLYTIRRALSFYRQPSVWEQLTERAMRGDYSWRRSANQYKQAYEQLIKKEEHTLVHG</sequence>
<evidence type="ECO:0000255" key="1">
    <source>
        <dbReference type="HAMAP-Rule" id="MF_00484"/>
    </source>
</evidence>
<keyword id="KW-0320">Glycogen biosynthesis</keyword>
<keyword id="KW-0328">Glycosyltransferase</keyword>
<keyword id="KW-0808">Transferase</keyword>
<proteinExistence type="inferred from homology"/>